<dbReference type="EC" id="2.1.3.15" evidence="2"/>
<dbReference type="EMBL" id="AF022186">
    <property type="protein sequence ID" value="AAB82686.1"/>
    <property type="molecule type" value="Genomic_DNA"/>
</dbReference>
<dbReference type="PIR" id="T11971">
    <property type="entry name" value="T11971"/>
</dbReference>
<dbReference type="RefSeq" id="NP_045075.1">
    <property type="nucleotide sequence ID" value="NC_001840.1"/>
</dbReference>
<dbReference type="SMR" id="O19903"/>
<dbReference type="GeneID" id="800225"/>
<dbReference type="UniPathway" id="UPA00655">
    <property type="reaction ID" value="UER00711"/>
</dbReference>
<dbReference type="GO" id="GO:0009317">
    <property type="term" value="C:acetyl-CoA carboxylase complex"/>
    <property type="evidence" value="ECO:0007669"/>
    <property type="project" value="InterPro"/>
</dbReference>
<dbReference type="GO" id="GO:0009507">
    <property type="term" value="C:chloroplast"/>
    <property type="evidence" value="ECO:0007669"/>
    <property type="project" value="UniProtKB-SubCell"/>
</dbReference>
<dbReference type="GO" id="GO:0003989">
    <property type="term" value="F:acetyl-CoA carboxylase activity"/>
    <property type="evidence" value="ECO:0007669"/>
    <property type="project" value="InterPro"/>
</dbReference>
<dbReference type="GO" id="GO:0005524">
    <property type="term" value="F:ATP binding"/>
    <property type="evidence" value="ECO:0007669"/>
    <property type="project" value="UniProtKB-KW"/>
</dbReference>
<dbReference type="GO" id="GO:0016743">
    <property type="term" value="F:carboxyl- or carbamoyltransferase activity"/>
    <property type="evidence" value="ECO:0007669"/>
    <property type="project" value="UniProtKB-UniRule"/>
</dbReference>
<dbReference type="GO" id="GO:0006633">
    <property type="term" value="P:fatty acid biosynthetic process"/>
    <property type="evidence" value="ECO:0007669"/>
    <property type="project" value="UniProtKB-KW"/>
</dbReference>
<dbReference type="GO" id="GO:2001295">
    <property type="term" value="P:malonyl-CoA biosynthetic process"/>
    <property type="evidence" value="ECO:0007669"/>
    <property type="project" value="UniProtKB-UniRule"/>
</dbReference>
<dbReference type="Gene3D" id="3.90.226.10">
    <property type="entry name" value="2-enoyl-CoA Hydratase, Chain A, domain 1"/>
    <property type="match status" value="1"/>
</dbReference>
<dbReference type="HAMAP" id="MF_00823">
    <property type="entry name" value="AcetylCoA_CT_alpha"/>
    <property type="match status" value="1"/>
</dbReference>
<dbReference type="InterPro" id="IPR001095">
    <property type="entry name" value="Acetyl_CoA_COase_a_su"/>
</dbReference>
<dbReference type="InterPro" id="IPR029045">
    <property type="entry name" value="ClpP/crotonase-like_dom_sf"/>
</dbReference>
<dbReference type="InterPro" id="IPR011763">
    <property type="entry name" value="COA_CT_C"/>
</dbReference>
<dbReference type="NCBIfam" id="TIGR00513">
    <property type="entry name" value="accA"/>
    <property type="match status" value="1"/>
</dbReference>
<dbReference type="NCBIfam" id="NF041504">
    <property type="entry name" value="AccA_sub"/>
    <property type="match status" value="1"/>
</dbReference>
<dbReference type="NCBIfam" id="NF004344">
    <property type="entry name" value="PRK05724.1"/>
    <property type="match status" value="1"/>
</dbReference>
<dbReference type="PANTHER" id="PTHR42853">
    <property type="entry name" value="ACETYL-COENZYME A CARBOXYLASE CARBOXYL TRANSFERASE SUBUNIT ALPHA"/>
    <property type="match status" value="1"/>
</dbReference>
<dbReference type="PANTHER" id="PTHR42853:SF3">
    <property type="entry name" value="ACETYL-COENZYME A CARBOXYLASE CARBOXYL TRANSFERASE SUBUNIT ALPHA, CHLOROPLASTIC"/>
    <property type="match status" value="1"/>
</dbReference>
<dbReference type="Pfam" id="PF03255">
    <property type="entry name" value="ACCA"/>
    <property type="match status" value="1"/>
</dbReference>
<dbReference type="PRINTS" id="PR01069">
    <property type="entry name" value="ACCCTRFRASEA"/>
</dbReference>
<dbReference type="SUPFAM" id="SSF52096">
    <property type="entry name" value="ClpP/crotonase"/>
    <property type="match status" value="1"/>
</dbReference>
<dbReference type="PROSITE" id="PS50989">
    <property type="entry name" value="COA_CT_CTER"/>
    <property type="match status" value="1"/>
</dbReference>
<organism>
    <name type="scientific">Cyanidium caldarium</name>
    <name type="common">Red alga</name>
    <dbReference type="NCBI Taxonomy" id="2771"/>
    <lineage>
        <taxon>Eukaryota</taxon>
        <taxon>Rhodophyta</taxon>
        <taxon>Bangiophyceae</taxon>
        <taxon>Cyanidiales</taxon>
        <taxon>Cyanidiaceae</taxon>
        <taxon>Cyanidium</taxon>
    </lineage>
</organism>
<keyword id="KW-0067">ATP-binding</keyword>
<keyword id="KW-0150">Chloroplast</keyword>
<keyword id="KW-0275">Fatty acid biosynthesis</keyword>
<keyword id="KW-0276">Fatty acid metabolism</keyword>
<keyword id="KW-0444">Lipid biosynthesis</keyword>
<keyword id="KW-0443">Lipid metabolism</keyword>
<keyword id="KW-0547">Nucleotide-binding</keyword>
<keyword id="KW-0934">Plastid</keyword>
<keyword id="KW-0808">Transferase</keyword>
<reference key="1">
    <citation type="journal article" date="2000" name="J. Mol. Evol.">
        <title>The structure and gene repertoire of an ancient red algal plastid genome.</title>
        <authorList>
            <person name="Gloeckner G."/>
            <person name="Rosenthal A."/>
            <person name="Valentin K.-U."/>
        </authorList>
    </citation>
    <scope>NUCLEOTIDE SEQUENCE [LARGE SCALE GENOMIC DNA]</scope>
    <source>
        <strain>RK-1</strain>
    </source>
</reference>
<evidence type="ECO:0000250" key="1"/>
<evidence type="ECO:0000255" key="2">
    <source>
        <dbReference type="HAMAP-Rule" id="MF_00823"/>
    </source>
</evidence>
<evidence type="ECO:0000255" key="3">
    <source>
        <dbReference type="PROSITE-ProRule" id="PRU01137"/>
    </source>
</evidence>
<accession>O19903</accession>
<sequence length="324" mass="36551">MKMLDKTLPLEELESSLTKTESKAYYLSKLVYRHDKVVNNKAHILQRKLLNLKKQLFYGLTSYQKLCVARHKRRPTTLDYIEYLLDSWIELHGDRRGSDDPAIITGIGRIGRRSVVVLGQQKGRNTKENVLRNFGMSSPGGYRKALRVMEHANKFKLPILTFIDTPGALAGVSAEKSGQAEAIATNLKKMFSFEVPIISTIIGEGGSGGALGICIGNYVMMFENSIYTVATPEACSSILWKDSTKAADAAEALKVRAEDLLTLKIIDEIIPEPFGVAHDYPLLMVRILKNKIRDQLDFFDTFSPSELKHHRYLKFRKLGLYYDC</sequence>
<proteinExistence type="inferred from homology"/>
<comment type="function">
    <text evidence="2">Component of the acetyl coenzyme A carboxylase (ACC) complex. First, biotin carboxylase catalyzes the carboxylation of biotin on its carrier protein (BCCP) and then the CO(2) group is transferred by the carboxyltransferase to acetyl-CoA to form malonyl-CoA.</text>
</comment>
<comment type="catalytic activity">
    <reaction evidence="2">
        <text>N(6)-carboxybiotinyl-L-lysyl-[protein] + acetyl-CoA = N(6)-biotinyl-L-lysyl-[protein] + malonyl-CoA</text>
        <dbReference type="Rhea" id="RHEA:54728"/>
        <dbReference type="Rhea" id="RHEA-COMP:10505"/>
        <dbReference type="Rhea" id="RHEA-COMP:10506"/>
        <dbReference type="ChEBI" id="CHEBI:57288"/>
        <dbReference type="ChEBI" id="CHEBI:57384"/>
        <dbReference type="ChEBI" id="CHEBI:83144"/>
        <dbReference type="ChEBI" id="CHEBI:83145"/>
        <dbReference type="EC" id="2.1.3.15"/>
    </reaction>
</comment>
<comment type="pathway">
    <text evidence="2">Lipid metabolism; malonyl-CoA biosynthesis; malonyl-CoA from acetyl-CoA: step 1/1.</text>
</comment>
<comment type="subunit">
    <text evidence="1">Acetyl-CoA carboxylase is a heterohexamer composed of biotin carboxyl carrier protein (accB), biotin carboxylase (accC) and two subunits each of ACCase subunit alpha (accA) and ACCase subunit beta (accD).</text>
</comment>
<comment type="subcellular location">
    <subcellularLocation>
        <location>Plastid</location>
        <location>Chloroplast</location>
    </subcellularLocation>
</comment>
<comment type="similarity">
    <text evidence="2">Belongs to the AccA family.</text>
</comment>
<geneLocation type="chloroplast"/>
<feature type="chain" id="PRO_0000146785" description="Acetyl-coenzyme A carboxylase carboxyl transferase subunit alpha">
    <location>
        <begin position="1"/>
        <end position="324"/>
    </location>
</feature>
<feature type="domain" description="CoA carboxyltransferase C-terminal" evidence="3">
    <location>
        <begin position="44"/>
        <end position="298"/>
    </location>
</feature>
<protein>
    <recommendedName>
        <fullName evidence="2">Acetyl-coenzyme A carboxylase carboxyl transferase subunit alpha</fullName>
        <shortName evidence="2">ACCase subunit alpha</shortName>
        <shortName evidence="2">Acetyl-CoA carboxylase carboxyltransferase subunit alpha</shortName>
        <ecNumber evidence="2">2.1.3.15</ecNumber>
    </recommendedName>
</protein>
<gene>
    <name evidence="2" type="primary">accA</name>
</gene>
<name>ACCA_CYACA</name>